<accession>Q8Z171</accession>
<accession>Q83SS3</accession>
<name>ULAB_SALTI</name>
<reference key="1">
    <citation type="journal article" date="2001" name="Nature">
        <title>Complete genome sequence of a multiple drug resistant Salmonella enterica serovar Typhi CT18.</title>
        <authorList>
            <person name="Parkhill J."/>
            <person name="Dougan G."/>
            <person name="James K.D."/>
            <person name="Thomson N.R."/>
            <person name="Pickard D."/>
            <person name="Wain J."/>
            <person name="Churcher C.M."/>
            <person name="Mungall K.L."/>
            <person name="Bentley S.D."/>
            <person name="Holden M.T.G."/>
            <person name="Sebaihia M."/>
            <person name="Baker S."/>
            <person name="Basham D."/>
            <person name="Brooks K."/>
            <person name="Chillingworth T."/>
            <person name="Connerton P."/>
            <person name="Cronin A."/>
            <person name="Davis P."/>
            <person name="Davies R.M."/>
            <person name="Dowd L."/>
            <person name="White N."/>
            <person name="Farrar J."/>
            <person name="Feltwell T."/>
            <person name="Hamlin N."/>
            <person name="Haque A."/>
            <person name="Hien T.T."/>
            <person name="Holroyd S."/>
            <person name="Jagels K."/>
            <person name="Krogh A."/>
            <person name="Larsen T.S."/>
            <person name="Leather S."/>
            <person name="Moule S."/>
            <person name="O'Gaora P."/>
            <person name="Parry C."/>
            <person name="Quail M.A."/>
            <person name="Rutherford K.M."/>
            <person name="Simmonds M."/>
            <person name="Skelton J."/>
            <person name="Stevens K."/>
            <person name="Whitehead S."/>
            <person name="Barrell B.G."/>
        </authorList>
    </citation>
    <scope>NUCLEOTIDE SEQUENCE [LARGE SCALE GENOMIC DNA]</scope>
    <source>
        <strain>CT18</strain>
    </source>
</reference>
<reference key="2">
    <citation type="journal article" date="2003" name="J. Bacteriol.">
        <title>Comparative genomics of Salmonella enterica serovar Typhi strains Ty2 and CT18.</title>
        <authorList>
            <person name="Deng W."/>
            <person name="Liou S.-R."/>
            <person name="Plunkett G. III"/>
            <person name="Mayhew G.F."/>
            <person name="Rose D.J."/>
            <person name="Burland V."/>
            <person name="Kodoyianni V."/>
            <person name="Schwartz D.C."/>
            <person name="Blattner F.R."/>
        </authorList>
    </citation>
    <scope>NUCLEOTIDE SEQUENCE [LARGE SCALE GENOMIC DNA]</scope>
    <source>
        <strain>ATCC 700931 / Ty2</strain>
    </source>
</reference>
<evidence type="ECO:0000250" key="1">
    <source>
        <dbReference type="UniProtKB" id="P00550"/>
    </source>
</evidence>
<evidence type="ECO:0000250" key="2">
    <source>
        <dbReference type="UniProtKB" id="P69822"/>
    </source>
</evidence>
<evidence type="ECO:0000255" key="3">
    <source>
        <dbReference type="PROSITE-ProRule" id="PRU00422"/>
    </source>
</evidence>
<evidence type="ECO:0000305" key="4"/>
<proteinExistence type="inferred from homology"/>
<sequence>MTVRILAVCGNGQGSSMIMKMKVDQFLTQSNIDHTVNSCAVGEYKSELSGADIIIASTHIAGEITVTGNKYVVGVRNMLSPADFGPKLLEVIKAHFPQDVK</sequence>
<gene>
    <name type="primary">ulaB</name>
    <name type="ordered locus">STY4740</name>
    <name type="ordered locus">t4435</name>
</gene>
<organism>
    <name type="scientific">Salmonella typhi</name>
    <dbReference type="NCBI Taxonomy" id="90370"/>
    <lineage>
        <taxon>Bacteria</taxon>
        <taxon>Pseudomonadati</taxon>
        <taxon>Pseudomonadota</taxon>
        <taxon>Gammaproteobacteria</taxon>
        <taxon>Enterobacterales</taxon>
        <taxon>Enterobacteriaceae</taxon>
        <taxon>Salmonella</taxon>
    </lineage>
</organism>
<dbReference type="EC" id="2.7.1.194" evidence="2"/>
<dbReference type="EMBL" id="AL513382">
    <property type="protein sequence ID" value="CAD06861.1"/>
    <property type="molecule type" value="Genomic_DNA"/>
</dbReference>
<dbReference type="EMBL" id="AE014613">
    <property type="protein sequence ID" value="AAO71882.1"/>
    <property type="status" value="ALT_FRAME"/>
    <property type="molecule type" value="Genomic_DNA"/>
</dbReference>
<dbReference type="RefSeq" id="NP_458818.1">
    <property type="nucleotide sequence ID" value="NC_003198.1"/>
</dbReference>
<dbReference type="RefSeq" id="WP_000218360.1">
    <property type="nucleotide sequence ID" value="NZ_QXGZ01000019.1"/>
</dbReference>
<dbReference type="SMR" id="Q8Z171"/>
<dbReference type="STRING" id="220341.gene:17588561"/>
<dbReference type="KEGG" id="stt:t4435"/>
<dbReference type="KEGG" id="sty:STY4740"/>
<dbReference type="PATRIC" id="fig|220341.7.peg.4841"/>
<dbReference type="eggNOG" id="COG3414">
    <property type="taxonomic scope" value="Bacteria"/>
</dbReference>
<dbReference type="HOGENOM" id="CLU_1509537_0_0_6"/>
<dbReference type="OMA" id="YDLIFCP"/>
<dbReference type="OrthoDB" id="6603449at2"/>
<dbReference type="Proteomes" id="UP000000541">
    <property type="component" value="Chromosome"/>
</dbReference>
<dbReference type="Proteomes" id="UP000002670">
    <property type="component" value="Chromosome"/>
</dbReference>
<dbReference type="GO" id="GO:0005737">
    <property type="term" value="C:cytoplasm"/>
    <property type="evidence" value="ECO:0007669"/>
    <property type="project" value="UniProtKB-SubCell"/>
</dbReference>
<dbReference type="GO" id="GO:0016301">
    <property type="term" value="F:kinase activity"/>
    <property type="evidence" value="ECO:0007669"/>
    <property type="project" value="UniProtKB-KW"/>
</dbReference>
<dbReference type="GO" id="GO:0008982">
    <property type="term" value="F:protein-N(PI)-phosphohistidine-sugar phosphotransferase activity"/>
    <property type="evidence" value="ECO:0007669"/>
    <property type="project" value="InterPro"/>
</dbReference>
<dbReference type="GO" id="GO:0009401">
    <property type="term" value="P:phosphoenolpyruvate-dependent sugar phosphotransferase system"/>
    <property type="evidence" value="ECO:0007669"/>
    <property type="project" value="UniProtKB-KW"/>
</dbReference>
<dbReference type="CDD" id="cd05563">
    <property type="entry name" value="PTS_IIB_ascorbate"/>
    <property type="match status" value="1"/>
</dbReference>
<dbReference type="FunFam" id="3.40.50.2300:FF:000030">
    <property type="entry name" value="PTS system, ascorbate-specific, IIB component"/>
    <property type="match status" value="1"/>
</dbReference>
<dbReference type="Gene3D" id="3.40.50.2300">
    <property type="match status" value="1"/>
</dbReference>
<dbReference type="InterPro" id="IPR036095">
    <property type="entry name" value="PTS_EIIB-like_sf"/>
</dbReference>
<dbReference type="InterPro" id="IPR013011">
    <property type="entry name" value="PTS_EIIB_2"/>
</dbReference>
<dbReference type="InterPro" id="IPR003501">
    <property type="entry name" value="PTS_EIIB_2/3"/>
</dbReference>
<dbReference type="NCBIfam" id="NF007586">
    <property type="entry name" value="PRK10222.1"/>
    <property type="match status" value="1"/>
</dbReference>
<dbReference type="Pfam" id="PF02302">
    <property type="entry name" value="PTS_IIB"/>
    <property type="match status" value="1"/>
</dbReference>
<dbReference type="SUPFAM" id="SSF52794">
    <property type="entry name" value="PTS system IIB component-like"/>
    <property type="match status" value="1"/>
</dbReference>
<dbReference type="PROSITE" id="PS51099">
    <property type="entry name" value="PTS_EIIB_TYPE_2"/>
    <property type="match status" value="1"/>
</dbReference>
<keyword id="KW-0963">Cytoplasm</keyword>
<keyword id="KW-0418">Kinase</keyword>
<keyword id="KW-0597">Phosphoprotein</keyword>
<keyword id="KW-0598">Phosphotransferase system</keyword>
<keyword id="KW-0808">Transferase</keyword>
<keyword id="KW-0813">Transport</keyword>
<protein>
    <recommendedName>
        <fullName evidence="2">Ascorbate-specific PTS system EIIB component</fullName>
        <ecNumber evidence="2">2.7.1.194</ecNumber>
    </recommendedName>
    <alternativeName>
        <fullName evidence="2">Ascorbate-specific phosphotransferase enzyme IIB component</fullName>
    </alternativeName>
</protein>
<feature type="chain" id="PRO_0000230325" description="Ascorbate-specific PTS system EIIB component">
    <location>
        <begin position="1"/>
        <end position="101"/>
    </location>
</feature>
<feature type="domain" description="PTS EIIB type-2" evidence="3">
    <location>
        <begin position="3"/>
        <end position="96"/>
    </location>
</feature>
<feature type="active site" description="Phosphocysteine intermediate" evidence="1 4">
    <location>
        <position position="9"/>
    </location>
</feature>
<feature type="modified residue" description="Phosphocysteine" evidence="1 4">
    <location>
        <position position="9"/>
    </location>
</feature>
<comment type="function">
    <text evidence="2">The phosphoenolpyruvate-dependent sugar phosphotransferase system (sugar PTS), a major carbohydrate active transport system, catalyzes the phosphorylation of incoming sugar substrates concomitantly with their translocation across the cell membrane. The enzyme II UlaABC PTS system is involved in ascorbate transport.</text>
</comment>
<comment type="catalytic activity">
    <reaction evidence="2">
        <text>N(pros)-phospho-L-histidyl-[protein] + L-ascorbate(out) = L-ascorbate 6-phosphate(in) + L-histidyl-[protein]</text>
        <dbReference type="Rhea" id="RHEA:42436"/>
        <dbReference type="Rhea" id="RHEA-COMP:9745"/>
        <dbReference type="Rhea" id="RHEA-COMP:9746"/>
        <dbReference type="ChEBI" id="CHEBI:29979"/>
        <dbReference type="ChEBI" id="CHEBI:38290"/>
        <dbReference type="ChEBI" id="CHEBI:61698"/>
        <dbReference type="ChEBI" id="CHEBI:64837"/>
        <dbReference type="EC" id="2.7.1.194"/>
    </reaction>
</comment>
<comment type="subcellular location">
    <subcellularLocation>
        <location evidence="4">Cytoplasm</location>
    </subcellularLocation>
</comment>
<comment type="induction">
    <text evidence="2">Induced by L-ascorbate. Repressed by UlaR.</text>
</comment>
<comment type="domain">
    <text evidence="3">The PTS EIIB type-2 domain is phosphorylated by phospho-EIIA on a cysteinyl residue. Then, it transfers the phosphoryl group to the sugar substrate concomitantly with the sugar uptake processed by the PTS EIIC type-2 domain.</text>
</comment>
<comment type="sequence caution" evidence="4">
    <conflict type="frameshift">
        <sequence resource="EMBL-CDS" id="AAO71882"/>
    </conflict>
</comment>